<feature type="signal peptide" evidence="1">
    <location>
        <begin position="1"/>
        <end position="22"/>
    </location>
</feature>
<feature type="propeptide" id="PRO_0000439786" description="Removed in mature form" evidence="5">
    <location>
        <begin position="23"/>
        <end position="44"/>
    </location>
</feature>
<feature type="peptide" id="PRO_0000439787" description="Temporin-SN1" evidence="2">
    <location>
        <begin position="47"/>
        <end position="65"/>
    </location>
</feature>
<feature type="modified residue" description="Lysine amide" evidence="2">
    <location>
        <position position="65"/>
    </location>
</feature>
<reference evidence="6" key="1">
    <citation type="journal article" date="2013" name="Biochimie">
        <title>Identification of multiple antimicrobial peptides from the skin of fine-spined frog, Hylarana spinulosa (Ranidae).</title>
        <authorList>
            <person name="Yang X."/>
            <person name="Hu Y."/>
            <person name="Xu S."/>
            <person name="Hu Y."/>
            <person name="Meng H."/>
            <person name="Guo C."/>
            <person name="Liu Y."/>
            <person name="Liu J."/>
            <person name="Yu Z."/>
            <person name="Wang H."/>
        </authorList>
    </citation>
    <scope>NUCLEOTIDE SEQUENCE [MRNA]</scope>
    <scope>PROTEIN SEQUENCE OF 47-65</scope>
    <scope>FUNCTION</scope>
    <scope>SYNTHESIS</scope>
    <scope>IDENTIFICATION BY MASS SPECTROMETRY</scope>
    <scope>AMIDATION AT LYS-65</scope>
    <source>
        <tissue evidence="3">Skin</tissue>
    </source>
</reference>
<accession>E7EKJ5</accession>
<keyword id="KW-0027">Amidation</keyword>
<keyword id="KW-0878">Amphibian defense peptide</keyword>
<keyword id="KW-0044">Antibiotic</keyword>
<keyword id="KW-0929">Antimicrobial</keyword>
<keyword id="KW-0165">Cleavage on pair of basic residues</keyword>
<keyword id="KW-0204">Cytolysis</keyword>
<keyword id="KW-0903">Direct protein sequencing</keyword>
<keyword id="KW-0354">Hemolysis</keyword>
<keyword id="KW-0964">Secreted</keyword>
<keyword id="KW-0732">Signal</keyword>
<dbReference type="EMBL" id="HQ735172">
    <property type="protein sequence ID" value="ADV36195.1"/>
    <property type="molecule type" value="mRNA"/>
</dbReference>
<dbReference type="GO" id="GO:0005576">
    <property type="term" value="C:extracellular region"/>
    <property type="evidence" value="ECO:0007669"/>
    <property type="project" value="UniProtKB-SubCell"/>
</dbReference>
<dbReference type="GO" id="GO:0050830">
    <property type="term" value="P:defense response to Gram-positive bacterium"/>
    <property type="evidence" value="ECO:0000314"/>
    <property type="project" value="UniProtKB"/>
</dbReference>
<dbReference type="GO" id="GO:0044179">
    <property type="term" value="P:hemolysis in another organism"/>
    <property type="evidence" value="ECO:0000314"/>
    <property type="project" value="UniProtKB"/>
</dbReference>
<dbReference type="InterPro" id="IPR004275">
    <property type="entry name" value="Frog_antimicrobial_propeptide"/>
</dbReference>
<dbReference type="Pfam" id="PF03032">
    <property type="entry name" value="FSAP_sig_propep"/>
    <property type="match status" value="1"/>
</dbReference>
<proteinExistence type="evidence at protein level"/>
<protein>
    <recommendedName>
        <fullName evidence="3">Temporin-SN1</fullName>
    </recommendedName>
</protein>
<organism evidence="3">
    <name type="scientific">Sylvirana spinulosa</name>
    <name type="common">Fine-spined frog</name>
    <name type="synonym">Hylarana spinulosa</name>
    <dbReference type="NCBI Taxonomy" id="369515"/>
    <lineage>
        <taxon>Eukaryota</taxon>
        <taxon>Metazoa</taxon>
        <taxon>Chordata</taxon>
        <taxon>Craniata</taxon>
        <taxon>Vertebrata</taxon>
        <taxon>Euteleostomi</taxon>
        <taxon>Amphibia</taxon>
        <taxon>Batrachia</taxon>
        <taxon>Anura</taxon>
        <taxon>Neobatrachia</taxon>
        <taxon>Ranoidea</taxon>
        <taxon>Ranidae</taxon>
        <taxon>Sylvirana</taxon>
    </lineage>
</organism>
<evidence type="ECO:0000255" key="1"/>
<evidence type="ECO:0000269" key="2">
    <source>
    </source>
</evidence>
<evidence type="ECO:0000303" key="3">
    <source>
    </source>
</evidence>
<evidence type="ECO:0000305" key="4"/>
<evidence type="ECO:0000305" key="5">
    <source>
    </source>
</evidence>
<evidence type="ECO:0000312" key="6">
    <source>
        <dbReference type="EMBL" id="ADV36195.1"/>
    </source>
</evidence>
<name>TP1_SYLSP</name>
<comment type="function">
    <text evidence="2">Antimicrobial peptide. Active against a variety of Gram-positive bacterial strains. Not active against Gram-negative bacteria and against fungi. Shows hemolytic activity against human erythrocytes.</text>
</comment>
<comment type="subcellular location">
    <subcellularLocation>
        <location evidence="5">Secreted</location>
    </subcellularLocation>
</comment>
<comment type="tissue specificity">
    <text evidence="5">Expressed by the skin glands.</text>
</comment>
<comment type="similarity">
    <text evidence="4">Belongs to the frog skin active peptide (FSAP) family. Temporin subfamily.</text>
</comment>
<sequence length="65" mass="7365">MFTTKKSLLLLFFLGTINLSLCQEERNAEEERRDGDDEGGVEVQKRFFPFLLGALGSLLPKIFGK</sequence>